<protein>
    <recommendedName>
        <fullName evidence="1">Cell division protein CrgA</fullName>
    </recommendedName>
</protein>
<dbReference type="EMBL" id="LT708304">
    <property type="protein sequence ID" value="SIT98356.1"/>
    <property type="molecule type" value="Genomic_DNA"/>
</dbReference>
<dbReference type="RefSeq" id="NP_853681.1">
    <property type="nucleotide sequence ID" value="NC_002945.3"/>
</dbReference>
<dbReference type="RefSeq" id="WP_003400344.1">
    <property type="nucleotide sequence ID" value="NC_002945.4"/>
</dbReference>
<dbReference type="BMRB" id="P67377"/>
<dbReference type="SMR" id="P67377"/>
<dbReference type="GeneID" id="45423970"/>
<dbReference type="KEGG" id="mbo:BQ2027_MB0011C"/>
<dbReference type="PATRIC" id="fig|233413.5.peg.15"/>
<dbReference type="Proteomes" id="UP000001419">
    <property type="component" value="Chromosome"/>
</dbReference>
<dbReference type="GO" id="GO:0005886">
    <property type="term" value="C:plasma membrane"/>
    <property type="evidence" value="ECO:0007669"/>
    <property type="project" value="UniProtKB-SubCell"/>
</dbReference>
<dbReference type="GO" id="GO:0051301">
    <property type="term" value="P:cell division"/>
    <property type="evidence" value="ECO:0007669"/>
    <property type="project" value="UniProtKB-UniRule"/>
</dbReference>
<dbReference type="HAMAP" id="MF_00631">
    <property type="entry name" value="CrgA"/>
    <property type="match status" value="1"/>
</dbReference>
<dbReference type="InterPro" id="IPR009619">
    <property type="entry name" value="CrgA"/>
</dbReference>
<dbReference type="NCBIfam" id="NF001194">
    <property type="entry name" value="PRK00159.1"/>
    <property type="match status" value="1"/>
</dbReference>
<dbReference type="Pfam" id="PF06781">
    <property type="entry name" value="CrgA"/>
    <property type="match status" value="1"/>
</dbReference>
<comment type="function">
    <text evidence="1">Involved in cell division.</text>
</comment>
<comment type="subcellular location">
    <subcellularLocation>
        <location evidence="1">Cell membrane</location>
        <topology evidence="1">Multi-pass membrane protein</topology>
    </subcellularLocation>
</comment>
<comment type="similarity">
    <text evidence="1">Belongs to the CrgA family.</text>
</comment>
<evidence type="ECO:0000255" key="1">
    <source>
        <dbReference type="HAMAP-Rule" id="MF_00631"/>
    </source>
</evidence>
<organism>
    <name type="scientific">Mycobacterium bovis (strain ATCC BAA-935 / AF2122/97)</name>
    <dbReference type="NCBI Taxonomy" id="233413"/>
    <lineage>
        <taxon>Bacteria</taxon>
        <taxon>Bacillati</taxon>
        <taxon>Actinomycetota</taxon>
        <taxon>Actinomycetes</taxon>
        <taxon>Mycobacteriales</taxon>
        <taxon>Mycobacteriaceae</taxon>
        <taxon>Mycobacterium</taxon>
        <taxon>Mycobacterium tuberculosis complex</taxon>
    </lineage>
</organism>
<sequence>MPKSKVRKKNDFTVSAVSRTPMKVKVGPSSVWFVSLFIGLMLIGLIWLMVFQLAAIGSQAPTALNWMAQLGPWNYAIAFAFMITGLLLTMRWH</sequence>
<name>CRGA_MYCBO</name>
<keyword id="KW-0131">Cell cycle</keyword>
<keyword id="KW-0132">Cell division</keyword>
<keyword id="KW-1003">Cell membrane</keyword>
<keyword id="KW-0472">Membrane</keyword>
<keyword id="KW-1185">Reference proteome</keyword>
<keyword id="KW-0812">Transmembrane</keyword>
<keyword id="KW-1133">Transmembrane helix</keyword>
<reference key="1">
    <citation type="journal article" date="2003" name="Proc. Natl. Acad. Sci. U.S.A.">
        <title>The complete genome sequence of Mycobacterium bovis.</title>
        <authorList>
            <person name="Garnier T."/>
            <person name="Eiglmeier K."/>
            <person name="Camus J.-C."/>
            <person name="Medina N."/>
            <person name="Mansoor H."/>
            <person name="Pryor M."/>
            <person name="Duthoy S."/>
            <person name="Grondin S."/>
            <person name="Lacroix C."/>
            <person name="Monsempe C."/>
            <person name="Simon S."/>
            <person name="Harris B."/>
            <person name="Atkin R."/>
            <person name="Doggett J."/>
            <person name="Mayes R."/>
            <person name="Keating L."/>
            <person name="Wheeler P.R."/>
            <person name="Parkhill J."/>
            <person name="Barrell B.G."/>
            <person name="Cole S.T."/>
            <person name="Gordon S.V."/>
            <person name="Hewinson R.G."/>
        </authorList>
    </citation>
    <scope>NUCLEOTIDE SEQUENCE [LARGE SCALE GENOMIC DNA]</scope>
    <source>
        <strain>ATCC BAA-935 / AF2122/97</strain>
    </source>
</reference>
<reference key="2">
    <citation type="journal article" date="2017" name="Genome Announc.">
        <title>Updated reference genome sequence and annotation of Mycobacterium bovis AF2122/97.</title>
        <authorList>
            <person name="Malone K.M."/>
            <person name="Farrell D."/>
            <person name="Stuber T.P."/>
            <person name="Schubert O.T."/>
            <person name="Aebersold R."/>
            <person name="Robbe-Austerman S."/>
            <person name="Gordon S.V."/>
        </authorList>
    </citation>
    <scope>NUCLEOTIDE SEQUENCE [LARGE SCALE GENOMIC DNA]</scope>
    <scope>GENOME REANNOTATION</scope>
    <source>
        <strain>ATCC BAA-935 / AF2122/97</strain>
    </source>
</reference>
<feature type="chain" id="PRO_0000216815" description="Cell division protein CrgA">
    <location>
        <begin position="1"/>
        <end position="93"/>
    </location>
</feature>
<feature type="transmembrane region" description="Helical" evidence="1">
    <location>
        <begin position="31"/>
        <end position="51"/>
    </location>
</feature>
<feature type="transmembrane region" description="Helical" evidence="1">
    <location>
        <begin position="70"/>
        <end position="90"/>
    </location>
</feature>
<gene>
    <name evidence="1" type="primary">crgA</name>
    <name type="ordered locus">BQ2027_MB0011C</name>
</gene>
<proteinExistence type="inferred from homology"/>
<accession>P67377</accession>
<accession>A0A1R3XU04</accession>
<accession>P71581</accession>
<accession>X2BDR8</accession>